<evidence type="ECO:0000255" key="1">
    <source>
        <dbReference type="HAMAP-Rule" id="MF_00081"/>
    </source>
</evidence>
<evidence type="ECO:0000305" key="2"/>
<protein>
    <recommendedName>
        <fullName evidence="1">Heat-inducible transcription repressor HrcA</fullName>
    </recommendedName>
</protein>
<gene>
    <name evidence="1" type="primary">hrcA</name>
    <name type="ordered locus">CV_1608</name>
</gene>
<comment type="function">
    <text evidence="1">Negative regulator of class I heat shock genes (grpE-dnaK-dnaJ and groELS operons). Prevents heat-shock induction of these operons.</text>
</comment>
<comment type="similarity">
    <text evidence="1">Belongs to the HrcA family.</text>
</comment>
<comment type="sequence caution" evidence="2">
    <conflict type="erroneous initiation">
        <sequence resource="EMBL-CDS" id="AAQ59284"/>
    </conflict>
</comment>
<proteinExistence type="inferred from homology"/>
<reference key="1">
    <citation type="journal article" date="2003" name="Proc. Natl. Acad. Sci. U.S.A.">
        <title>The complete genome sequence of Chromobacterium violaceum reveals remarkable and exploitable bacterial adaptability.</title>
        <authorList>
            <person name="Vasconcelos A.T.R."/>
            <person name="de Almeida D.F."/>
            <person name="Hungria M."/>
            <person name="Guimaraes C.T."/>
            <person name="Antonio R.V."/>
            <person name="Almeida F.C."/>
            <person name="de Almeida L.G.P."/>
            <person name="de Almeida R."/>
            <person name="Alves-Gomes J.A."/>
            <person name="Andrade E.M."/>
            <person name="Araripe J."/>
            <person name="de Araujo M.F.F."/>
            <person name="Astolfi-Filho S."/>
            <person name="Azevedo V."/>
            <person name="Baptista A.J."/>
            <person name="Bataus L.A.M."/>
            <person name="Batista J.S."/>
            <person name="Belo A."/>
            <person name="van den Berg C."/>
            <person name="Bogo M."/>
            <person name="Bonatto S."/>
            <person name="Bordignon J."/>
            <person name="Brigido M.M."/>
            <person name="Brito C.A."/>
            <person name="Brocchi M."/>
            <person name="Burity H.A."/>
            <person name="Camargo A.A."/>
            <person name="Cardoso D.D.P."/>
            <person name="Carneiro N.P."/>
            <person name="Carraro D.M."/>
            <person name="Carvalho C.M.B."/>
            <person name="Cascardo J.C.M."/>
            <person name="Cavada B.S."/>
            <person name="Chueire L.M.O."/>
            <person name="Creczynski-Pasa T.B."/>
            <person name="Cunha-Junior N.C."/>
            <person name="Fagundes N."/>
            <person name="Falcao C.L."/>
            <person name="Fantinatti F."/>
            <person name="Farias I.P."/>
            <person name="Felipe M.S.S."/>
            <person name="Ferrari L.P."/>
            <person name="Ferro J.A."/>
            <person name="Ferro M.I.T."/>
            <person name="Franco G.R."/>
            <person name="Freitas N.S.A."/>
            <person name="Furlan L.R."/>
            <person name="Gazzinelli R.T."/>
            <person name="Gomes E.A."/>
            <person name="Goncalves P.R."/>
            <person name="Grangeiro T.B."/>
            <person name="Grattapaglia D."/>
            <person name="Grisard E.C."/>
            <person name="Hanna E.S."/>
            <person name="Jardim S.N."/>
            <person name="Laurino J."/>
            <person name="Leoi L.C.T."/>
            <person name="Lima L.F.A."/>
            <person name="Loureiro M.F."/>
            <person name="Lyra M.C.C.P."/>
            <person name="Madeira H.M.F."/>
            <person name="Manfio G.P."/>
            <person name="Maranhao A.Q."/>
            <person name="Martins W.S."/>
            <person name="di Mauro S.M.Z."/>
            <person name="de Medeiros S.R.B."/>
            <person name="Meissner R.V."/>
            <person name="Moreira M.A.M."/>
            <person name="Nascimento F.F."/>
            <person name="Nicolas M.F."/>
            <person name="Oliveira J.G."/>
            <person name="Oliveira S.C."/>
            <person name="Paixao R.F.C."/>
            <person name="Parente J.A."/>
            <person name="Pedrosa F.O."/>
            <person name="Pena S.D.J."/>
            <person name="Pereira J.O."/>
            <person name="Pereira M."/>
            <person name="Pinto L.S.R.C."/>
            <person name="Pinto L.S."/>
            <person name="Porto J.I.R."/>
            <person name="Potrich D.P."/>
            <person name="Ramalho-Neto C.E."/>
            <person name="Reis A.M.M."/>
            <person name="Rigo L.U."/>
            <person name="Rondinelli E."/>
            <person name="Santos E.B.P."/>
            <person name="Santos F.R."/>
            <person name="Schneider M.P.C."/>
            <person name="Seuanez H.N."/>
            <person name="Silva A.M.R."/>
            <person name="da Silva A.L.C."/>
            <person name="Silva D.W."/>
            <person name="Silva R."/>
            <person name="Simoes I.C."/>
            <person name="Simon D."/>
            <person name="Soares C.M.A."/>
            <person name="Soares R.B.A."/>
            <person name="Souza E.M."/>
            <person name="Souza K.R.L."/>
            <person name="Souza R.C."/>
            <person name="Steffens M.B.R."/>
            <person name="Steindel M."/>
            <person name="Teixeira S.R."/>
            <person name="Urmenyi T."/>
            <person name="Vettore A."/>
            <person name="Wassem R."/>
            <person name="Zaha A."/>
            <person name="Simpson A.J.G."/>
        </authorList>
    </citation>
    <scope>NUCLEOTIDE SEQUENCE [LARGE SCALE GENOMIC DNA]</scope>
    <source>
        <strain>ATCC 12472 / DSM 30191 / JCM 1249 / CCUG 213 / NBRC 12614 / NCIMB 9131 / NCTC 9757 / MK</strain>
    </source>
</reference>
<dbReference type="EMBL" id="AE016825">
    <property type="protein sequence ID" value="AAQ59284.1"/>
    <property type="status" value="ALT_INIT"/>
    <property type="molecule type" value="Genomic_DNA"/>
</dbReference>
<dbReference type="RefSeq" id="WP_043595811.1">
    <property type="nucleotide sequence ID" value="NC_005085.1"/>
</dbReference>
<dbReference type="SMR" id="Q7NXL8"/>
<dbReference type="STRING" id="243365.CV_1608"/>
<dbReference type="GeneID" id="66367292"/>
<dbReference type="KEGG" id="cvi:CV_1608"/>
<dbReference type="eggNOG" id="COG1420">
    <property type="taxonomic scope" value="Bacteria"/>
</dbReference>
<dbReference type="HOGENOM" id="CLU_050019_0_0_4"/>
<dbReference type="OrthoDB" id="9783139at2"/>
<dbReference type="Proteomes" id="UP000001424">
    <property type="component" value="Chromosome"/>
</dbReference>
<dbReference type="GO" id="GO:0003677">
    <property type="term" value="F:DNA binding"/>
    <property type="evidence" value="ECO:0007669"/>
    <property type="project" value="InterPro"/>
</dbReference>
<dbReference type="GO" id="GO:0045892">
    <property type="term" value="P:negative regulation of DNA-templated transcription"/>
    <property type="evidence" value="ECO:0007669"/>
    <property type="project" value="UniProtKB-UniRule"/>
</dbReference>
<dbReference type="Gene3D" id="3.30.450.40">
    <property type="match status" value="1"/>
</dbReference>
<dbReference type="Gene3D" id="3.30.390.60">
    <property type="entry name" value="Heat-inducible transcription repressor hrca homolog, domain 3"/>
    <property type="match status" value="1"/>
</dbReference>
<dbReference type="Gene3D" id="1.10.10.10">
    <property type="entry name" value="Winged helix-like DNA-binding domain superfamily/Winged helix DNA-binding domain"/>
    <property type="match status" value="1"/>
</dbReference>
<dbReference type="HAMAP" id="MF_00081">
    <property type="entry name" value="HrcA"/>
    <property type="match status" value="1"/>
</dbReference>
<dbReference type="InterPro" id="IPR029016">
    <property type="entry name" value="GAF-like_dom_sf"/>
</dbReference>
<dbReference type="InterPro" id="IPR002571">
    <property type="entry name" value="HrcA"/>
</dbReference>
<dbReference type="InterPro" id="IPR021153">
    <property type="entry name" value="HrcA_C"/>
</dbReference>
<dbReference type="InterPro" id="IPR036388">
    <property type="entry name" value="WH-like_DNA-bd_sf"/>
</dbReference>
<dbReference type="InterPro" id="IPR036390">
    <property type="entry name" value="WH_DNA-bd_sf"/>
</dbReference>
<dbReference type="InterPro" id="IPR005104">
    <property type="entry name" value="WHTH_HrcA_DNA-bd"/>
</dbReference>
<dbReference type="InterPro" id="IPR023120">
    <property type="entry name" value="WHTH_transcript_rep_HrcA_IDD"/>
</dbReference>
<dbReference type="NCBIfam" id="TIGR00331">
    <property type="entry name" value="hrcA"/>
    <property type="match status" value="1"/>
</dbReference>
<dbReference type="PANTHER" id="PTHR34824">
    <property type="entry name" value="HEAT-INDUCIBLE TRANSCRIPTION REPRESSOR HRCA"/>
    <property type="match status" value="1"/>
</dbReference>
<dbReference type="PANTHER" id="PTHR34824:SF1">
    <property type="entry name" value="HEAT-INDUCIBLE TRANSCRIPTION REPRESSOR HRCA"/>
    <property type="match status" value="1"/>
</dbReference>
<dbReference type="Pfam" id="PF01628">
    <property type="entry name" value="HrcA"/>
    <property type="match status" value="1"/>
</dbReference>
<dbReference type="Pfam" id="PF03444">
    <property type="entry name" value="HrcA_DNA-bdg"/>
    <property type="match status" value="1"/>
</dbReference>
<dbReference type="PIRSF" id="PIRSF005485">
    <property type="entry name" value="HrcA"/>
    <property type="match status" value="1"/>
</dbReference>
<dbReference type="SUPFAM" id="SSF55781">
    <property type="entry name" value="GAF domain-like"/>
    <property type="match status" value="1"/>
</dbReference>
<dbReference type="SUPFAM" id="SSF46785">
    <property type="entry name" value="Winged helix' DNA-binding domain"/>
    <property type="match status" value="1"/>
</dbReference>
<keyword id="KW-1185">Reference proteome</keyword>
<keyword id="KW-0678">Repressor</keyword>
<keyword id="KW-0346">Stress response</keyword>
<keyword id="KW-0804">Transcription</keyword>
<keyword id="KW-0805">Transcription regulation</keyword>
<feature type="chain" id="PRO_0000182470" description="Heat-inducible transcription repressor HrcA">
    <location>
        <begin position="1"/>
        <end position="340"/>
    </location>
</feature>
<organism>
    <name type="scientific">Chromobacterium violaceum (strain ATCC 12472 / DSM 30191 / JCM 1249 / CCUG 213 / NBRC 12614 / NCIMB 9131 / NCTC 9757 / MK)</name>
    <dbReference type="NCBI Taxonomy" id="243365"/>
    <lineage>
        <taxon>Bacteria</taxon>
        <taxon>Pseudomonadati</taxon>
        <taxon>Pseudomonadota</taxon>
        <taxon>Betaproteobacteria</taxon>
        <taxon>Neisseriales</taxon>
        <taxon>Chromobacteriaceae</taxon>
        <taxon>Chromobacterium</taxon>
    </lineage>
</organism>
<name>HRCA_CHRVO</name>
<accession>Q7NXL8</accession>
<sequence>MMNERAQHLLKALIERYIADGQPVASKTLSLLPGVELSSATVRNVLADLENMGLIASPHTSAGRVPTARGYRLFVDRLLTIRPLDELSRHELEANLQPDSPQRIVQAASSLLSELTSFAGVVLTPQRSDVAFRQIEFLRLSERRVLMILVTLDGDVQNHLLVTERDYTPSELIEAGNFINQHYAGQGLSAVAQRVESELKQLQGDIAELMAAAVKLGQQTLAKRSEDVVVSGGSRLLQVHDLSDDLSRLRELFGVFERKTELLKLLAQGREAQGVNIFIGEESGVMTLDECSVVTAPYCINGQVVGTLGVVGPTRMAYERVIPIVDITARLVSNALSFRE</sequence>